<protein>
    <recommendedName>
        <fullName>Troponin T, fast skeletal muscle isoforms</fullName>
    </recommendedName>
</protein>
<comment type="function">
    <text>Troponin T is the tropomyosin-binding subunit of troponin, the thin filament regulatory complex which confers calcium-sensitivity to striated muscle actomyosin ATPase activity.</text>
</comment>
<comment type="alternative products">
    <event type="alternative splicing"/>
    <isoform>
        <id>P06398-1</id>
        <name>1</name>
        <sequence type="displayed"/>
    </isoform>
    <isoform>
        <id>P06398-2</id>
        <name>2</name>
        <sequence type="described" ref="VSP_006637"/>
    </isoform>
    <isoform>
        <id>P06398-3</id>
        <name>3</name>
        <sequence type="described" ref="VSP_006638"/>
    </isoform>
    <text>Additional isoforms seem to exist.</text>
</comment>
<comment type="similarity">
    <text evidence="3">Belongs to the troponin T family.</text>
</comment>
<feature type="initiator methionine" description="Removed" evidence="1">
    <location>
        <position position="1"/>
    </location>
</feature>
<feature type="chain" id="PRO_0000186184" description="Troponin T, fast skeletal muscle isoforms">
    <location>
        <begin position="2"/>
        <end position="253"/>
    </location>
</feature>
<feature type="region of interest" description="Disordered" evidence="2">
    <location>
        <begin position="1"/>
        <end position="58"/>
    </location>
</feature>
<feature type="region of interest" description="Disordered" evidence="2">
    <location>
        <begin position="97"/>
        <end position="178"/>
    </location>
</feature>
<feature type="compositionally biased region" description="Acidic residues" evidence="2">
    <location>
        <begin position="1"/>
        <end position="25"/>
    </location>
</feature>
<feature type="compositionally biased region" description="Basic and acidic residues" evidence="2">
    <location>
        <begin position="46"/>
        <end position="58"/>
    </location>
</feature>
<feature type="compositionally biased region" description="Basic and acidic residues" evidence="2">
    <location>
        <begin position="97"/>
        <end position="139"/>
    </location>
</feature>
<feature type="compositionally biased region" description="Basic and acidic residues" evidence="2">
    <location>
        <begin position="167"/>
        <end position="178"/>
    </location>
</feature>
<feature type="modified residue" description="N-acetylserine" evidence="1">
    <location>
        <position position="2"/>
    </location>
</feature>
<feature type="splice variant" id="VSP_006637" description="In isoform 2." evidence="3">
    <location>
        <begin position="28"/>
        <end position="31"/>
    </location>
</feature>
<feature type="splice variant" id="VSP_006638" description="In isoform 3." evidence="3">
    <original>LTLRCRLQELSKF</original>
    <variation>VTLRNRIDQAQKH</variation>
    <location>
        <begin position="226"/>
        <end position="238"/>
    </location>
</feature>
<sequence length="253" mass="30098">MSDTEEVEHGEEEYEEEEEVQEEEVHEPAPPPEEKPRIKLTAPKIPEGEKVDFDDIQKKRQNKDLIELQALIDSHFEARRKEEEELVALKERIEKRRAERAEQQRIRAEKEKERQARLAEEKARREEEDAKRKAEDDLKKKKALSSMGASYSSYLAKADQKRGKKQTARETKKKVLAERRKPLNIDHLNEDKLRDKAKELWDWLYQLQTEKYDFTEQIKRKKYEILTLRCRLQELSKFSKKAGAKGKVGGRWK</sequence>
<evidence type="ECO:0000250" key="1"/>
<evidence type="ECO:0000256" key="2">
    <source>
        <dbReference type="SAM" id="MobiDB-lite"/>
    </source>
</evidence>
<evidence type="ECO:0000305" key="3"/>
<gene>
    <name type="primary">TNNT3</name>
</gene>
<organism>
    <name type="scientific">Coturnix japonica</name>
    <name type="common">Japanese quail</name>
    <name type="synonym">Coturnix coturnix japonica</name>
    <dbReference type="NCBI Taxonomy" id="93934"/>
    <lineage>
        <taxon>Eukaryota</taxon>
        <taxon>Metazoa</taxon>
        <taxon>Chordata</taxon>
        <taxon>Craniata</taxon>
        <taxon>Vertebrata</taxon>
        <taxon>Euteleostomi</taxon>
        <taxon>Archelosauria</taxon>
        <taxon>Archosauria</taxon>
        <taxon>Dinosauria</taxon>
        <taxon>Saurischia</taxon>
        <taxon>Theropoda</taxon>
        <taxon>Coelurosauria</taxon>
        <taxon>Aves</taxon>
        <taxon>Neognathae</taxon>
        <taxon>Galloanserae</taxon>
        <taxon>Galliformes</taxon>
        <taxon>Phasianidae</taxon>
        <taxon>Perdicinae</taxon>
        <taxon>Coturnix</taxon>
    </lineage>
</organism>
<keyword id="KW-0007">Acetylation</keyword>
<keyword id="KW-0025">Alternative splicing</keyword>
<keyword id="KW-0514">Muscle protein</keyword>
<keyword id="KW-0597">Phosphoprotein</keyword>
<keyword id="KW-1185">Reference proteome</keyword>
<accession>P06398</accession>
<accession>P06397</accession>
<reference key="1">
    <citation type="journal article" date="1989" name="J. Biol. Chem.">
        <title>Developmental and muscle-specific regulation of avian fast skeletal troponin T isoform expression by mRNA splicing.</title>
        <authorList>
            <person name="Bucher E.A."/>
            <person name="de la Brousse F.C."/>
            <person name="Emerson C.P. Jr."/>
        </authorList>
    </citation>
    <scope>NUCLEOTIDE SEQUENCE [MRNA]</scope>
</reference>
<reference key="2">
    <citation type="journal article" date="1985" name="J. Biol. Chem.">
        <title>Generation of troponin T isoforms by alternative RNA splicing in avian skeletal muscle. Conserved and divergent features in birds and mammals.</title>
        <authorList>
            <person name="Hastings K.E.M."/>
            <person name="Bucher E.A."/>
            <person name="Emerson C.P. Jr."/>
        </authorList>
    </citation>
    <scope>NUCLEOTIDE SEQUENCE [MRNA] OF 109-253</scope>
</reference>
<proteinExistence type="evidence at transcript level"/>
<name>TNNT3_COTJA</name>
<dbReference type="EMBL" id="M26600">
    <property type="protein sequence ID" value="AAA49506.1"/>
    <property type="molecule type" value="mRNA"/>
</dbReference>
<dbReference type="EMBL" id="M26599">
    <property type="protein sequence ID" value="AAA49505.1"/>
    <property type="molecule type" value="mRNA"/>
</dbReference>
<dbReference type="EMBL" id="M11685">
    <property type="protein sequence ID" value="AAA49504.1"/>
    <property type="molecule type" value="mRNA"/>
</dbReference>
<dbReference type="EMBL" id="M11684">
    <property type="protein sequence ID" value="AAA49503.1"/>
    <property type="molecule type" value="mRNA"/>
</dbReference>
<dbReference type="PIR" id="A03084">
    <property type="entry name" value="TPQJT1"/>
</dbReference>
<dbReference type="PIR" id="A03085">
    <property type="entry name" value="TPQJT2"/>
</dbReference>
<dbReference type="PIR" id="A34327">
    <property type="entry name" value="A34327"/>
</dbReference>
<dbReference type="PIR" id="B34327">
    <property type="entry name" value="B34327"/>
</dbReference>
<dbReference type="SMR" id="P06398"/>
<dbReference type="Proteomes" id="UP000694412">
    <property type="component" value="Unplaced"/>
</dbReference>
<dbReference type="GO" id="GO:0005861">
    <property type="term" value="C:troponin complex"/>
    <property type="evidence" value="ECO:0007669"/>
    <property type="project" value="InterPro"/>
</dbReference>
<dbReference type="GO" id="GO:0005523">
    <property type="term" value="F:tropomyosin binding"/>
    <property type="evidence" value="ECO:0007669"/>
    <property type="project" value="TreeGrafter"/>
</dbReference>
<dbReference type="GO" id="GO:0030172">
    <property type="term" value="F:troponin C binding"/>
    <property type="evidence" value="ECO:0007669"/>
    <property type="project" value="TreeGrafter"/>
</dbReference>
<dbReference type="GO" id="GO:0031013">
    <property type="term" value="F:troponin I binding"/>
    <property type="evidence" value="ECO:0007669"/>
    <property type="project" value="TreeGrafter"/>
</dbReference>
<dbReference type="GO" id="GO:0006937">
    <property type="term" value="P:regulation of muscle contraction"/>
    <property type="evidence" value="ECO:0007669"/>
    <property type="project" value="InterPro"/>
</dbReference>
<dbReference type="GO" id="GO:0045214">
    <property type="term" value="P:sarcomere organization"/>
    <property type="evidence" value="ECO:0007669"/>
    <property type="project" value="TreeGrafter"/>
</dbReference>
<dbReference type="GO" id="GO:0003009">
    <property type="term" value="P:skeletal muscle contraction"/>
    <property type="evidence" value="ECO:0007669"/>
    <property type="project" value="TreeGrafter"/>
</dbReference>
<dbReference type="FunFam" id="1.20.5.350:FF:000001">
    <property type="entry name" value="Troponin T, fast skeletal muscle"/>
    <property type="match status" value="1"/>
</dbReference>
<dbReference type="Gene3D" id="1.20.5.350">
    <property type="match status" value="1"/>
</dbReference>
<dbReference type="InterPro" id="IPR027707">
    <property type="entry name" value="TNNT"/>
</dbReference>
<dbReference type="InterPro" id="IPR001978">
    <property type="entry name" value="Troponin"/>
</dbReference>
<dbReference type="InterPro" id="IPR038077">
    <property type="entry name" value="Troponin_sf"/>
</dbReference>
<dbReference type="PANTHER" id="PTHR11521">
    <property type="entry name" value="TROPONIN T"/>
    <property type="match status" value="1"/>
</dbReference>
<dbReference type="PANTHER" id="PTHR11521:SF4">
    <property type="entry name" value="TROPONIN T, FAST SKELETAL MUSCLE"/>
    <property type="match status" value="1"/>
</dbReference>
<dbReference type="Pfam" id="PF00992">
    <property type="entry name" value="Troponin"/>
    <property type="match status" value="1"/>
</dbReference>
<dbReference type="SUPFAM" id="SSF90250">
    <property type="entry name" value="Troponin coil-coiled subunits"/>
    <property type="match status" value="1"/>
</dbReference>